<reference key="1">
    <citation type="journal article" date="2005" name="Nucleic Acids Res.">
        <title>The genome sequence of Salmonella enterica serovar Choleraesuis, a highly invasive and resistant zoonotic pathogen.</title>
        <authorList>
            <person name="Chiu C.-H."/>
            <person name="Tang P."/>
            <person name="Chu C."/>
            <person name="Hu S."/>
            <person name="Bao Q."/>
            <person name="Yu J."/>
            <person name="Chou Y.-Y."/>
            <person name="Wang H.-S."/>
            <person name="Lee Y.-S."/>
        </authorList>
    </citation>
    <scope>NUCLEOTIDE SEQUENCE [LARGE SCALE GENOMIC DNA]</scope>
    <source>
        <strain>SC-B67</strain>
    </source>
</reference>
<feature type="chain" id="PRO_0000249445" description="NADH-quinone oxidoreductase subunit N">
    <location>
        <begin position="1"/>
        <end position="485"/>
    </location>
</feature>
<feature type="transmembrane region" description="Helical" evidence="1">
    <location>
        <begin position="8"/>
        <end position="28"/>
    </location>
</feature>
<feature type="transmembrane region" description="Helical" evidence="1">
    <location>
        <begin position="35"/>
        <end position="55"/>
    </location>
</feature>
<feature type="transmembrane region" description="Helical" evidence="1">
    <location>
        <begin position="71"/>
        <end position="91"/>
    </location>
</feature>
<feature type="transmembrane region" description="Helical" evidence="1">
    <location>
        <begin position="105"/>
        <end position="125"/>
    </location>
</feature>
<feature type="transmembrane region" description="Helical" evidence="1">
    <location>
        <begin position="127"/>
        <end position="147"/>
    </location>
</feature>
<feature type="transmembrane region" description="Helical" evidence="1">
    <location>
        <begin position="159"/>
        <end position="179"/>
    </location>
</feature>
<feature type="transmembrane region" description="Helical" evidence="1">
    <location>
        <begin position="203"/>
        <end position="223"/>
    </location>
</feature>
<feature type="transmembrane region" description="Helical" evidence="1">
    <location>
        <begin position="235"/>
        <end position="255"/>
    </location>
</feature>
<feature type="transmembrane region" description="Helical" evidence="1">
    <location>
        <begin position="271"/>
        <end position="291"/>
    </location>
</feature>
<feature type="transmembrane region" description="Helical" evidence="1">
    <location>
        <begin position="297"/>
        <end position="317"/>
    </location>
</feature>
<feature type="transmembrane region" description="Helical" evidence="1">
    <location>
        <begin position="326"/>
        <end position="346"/>
    </location>
</feature>
<feature type="transmembrane region" description="Helical" evidence="1">
    <location>
        <begin position="373"/>
        <end position="393"/>
    </location>
</feature>
<feature type="transmembrane region" description="Helical" evidence="1">
    <location>
        <begin position="408"/>
        <end position="430"/>
    </location>
</feature>
<feature type="transmembrane region" description="Helical" evidence="1">
    <location>
        <begin position="455"/>
        <end position="475"/>
    </location>
</feature>
<evidence type="ECO:0000255" key="1">
    <source>
        <dbReference type="HAMAP-Rule" id="MF_00445"/>
    </source>
</evidence>
<protein>
    <recommendedName>
        <fullName evidence="1">NADH-quinone oxidoreductase subunit N</fullName>
        <ecNumber evidence="1">7.1.1.-</ecNumber>
    </recommendedName>
    <alternativeName>
        <fullName evidence="1">NADH dehydrogenase I subunit N</fullName>
    </alternativeName>
    <alternativeName>
        <fullName evidence="1">NDH-1 subunit N</fullName>
    </alternativeName>
</protein>
<proteinExistence type="inferred from homology"/>
<gene>
    <name evidence="1" type="primary">nuoN</name>
    <name type="ordered locus">SCH_2316</name>
</gene>
<keyword id="KW-0997">Cell inner membrane</keyword>
<keyword id="KW-1003">Cell membrane</keyword>
<keyword id="KW-0472">Membrane</keyword>
<keyword id="KW-0520">NAD</keyword>
<keyword id="KW-0874">Quinone</keyword>
<keyword id="KW-1278">Translocase</keyword>
<keyword id="KW-0812">Transmembrane</keyword>
<keyword id="KW-1133">Transmembrane helix</keyword>
<keyword id="KW-0813">Transport</keyword>
<keyword id="KW-0830">Ubiquinone</keyword>
<name>NUON_SALCH</name>
<dbReference type="EC" id="7.1.1.-" evidence="1"/>
<dbReference type="EMBL" id="AE017220">
    <property type="protein sequence ID" value="AAX66222.1"/>
    <property type="molecule type" value="Genomic_DNA"/>
</dbReference>
<dbReference type="RefSeq" id="WP_001540509.1">
    <property type="nucleotide sequence ID" value="NC_006905.1"/>
</dbReference>
<dbReference type="SMR" id="Q57M40"/>
<dbReference type="KEGG" id="sec:SCH_2316"/>
<dbReference type="HOGENOM" id="CLU_007100_1_5_6"/>
<dbReference type="Proteomes" id="UP000000538">
    <property type="component" value="Chromosome"/>
</dbReference>
<dbReference type="GO" id="GO:0005886">
    <property type="term" value="C:plasma membrane"/>
    <property type="evidence" value="ECO:0007669"/>
    <property type="project" value="UniProtKB-SubCell"/>
</dbReference>
<dbReference type="GO" id="GO:0008137">
    <property type="term" value="F:NADH dehydrogenase (ubiquinone) activity"/>
    <property type="evidence" value="ECO:0007669"/>
    <property type="project" value="InterPro"/>
</dbReference>
<dbReference type="GO" id="GO:0050136">
    <property type="term" value="F:NADH:ubiquinone reductase (non-electrogenic) activity"/>
    <property type="evidence" value="ECO:0007669"/>
    <property type="project" value="UniProtKB-UniRule"/>
</dbReference>
<dbReference type="GO" id="GO:0048038">
    <property type="term" value="F:quinone binding"/>
    <property type="evidence" value="ECO:0007669"/>
    <property type="project" value="UniProtKB-KW"/>
</dbReference>
<dbReference type="GO" id="GO:0042773">
    <property type="term" value="P:ATP synthesis coupled electron transport"/>
    <property type="evidence" value="ECO:0007669"/>
    <property type="project" value="InterPro"/>
</dbReference>
<dbReference type="HAMAP" id="MF_00445">
    <property type="entry name" value="NDH1_NuoN_1"/>
    <property type="match status" value="1"/>
</dbReference>
<dbReference type="InterPro" id="IPR010096">
    <property type="entry name" value="NADH-Q_OxRdtase_suN/2"/>
</dbReference>
<dbReference type="InterPro" id="IPR001750">
    <property type="entry name" value="ND/Mrp_TM"/>
</dbReference>
<dbReference type="NCBIfam" id="TIGR01770">
    <property type="entry name" value="NDH_I_N"/>
    <property type="match status" value="1"/>
</dbReference>
<dbReference type="NCBIfam" id="NF004439">
    <property type="entry name" value="PRK05777.1-1"/>
    <property type="match status" value="1"/>
</dbReference>
<dbReference type="PANTHER" id="PTHR22773">
    <property type="entry name" value="NADH DEHYDROGENASE"/>
    <property type="match status" value="1"/>
</dbReference>
<dbReference type="Pfam" id="PF00361">
    <property type="entry name" value="Proton_antipo_M"/>
    <property type="match status" value="1"/>
</dbReference>
<sequence length="485" mass="52041">MTITPQHLIALLPLLIVGLTVVVVMLSIAWRRNHFLNATLSVIGLNAALVSLWFVGQAGAMDVTPLMRVDGFAMLYTGLVLLASLATCTFAYPWLEGYNDNQEEFYLLVLIASLGGILLANANHLAALFLGIELISLPLFGLIGYAFRQKRSLEASIKYTILSAAASSFLLFGMALVYAQSGNLSFEALGKSLGDGMLHEPLLLAGFGLMIVGLGFKLSLVPFHLWTPDVYQGAPAPVSTFLATASKIAIFGVVMRLFLYAPVGDSEAVRVVLGIIAFASIIFGNLMALSQTNIKRLLGYSSISHLGYLLVALIVLQSGEMSMEAVGVYLAGYLFSSLGAFGVVSLMSSPFRGPDADSLYSYRGLFWHRPVLAAVMTVMMLSLAGIPMTLGFIGKFYVLAVGVQASLWWLVAAVVVGSAIGLYYYLRVAVSLYLHAPQQPGRDAPTNWQYSAGGIVVLISALLVLVLGVWPQPLISLVQLAMPLM</sequence>
<organism>
    <name type="scientific">Salmonella choleraesuis (strain SC-B67)</name>
    <dbReference type="NCBI Taxonomy" id="321314"/>
    <lineage>
        <taxon>Bacteria</taxon>
        <taxon>Pseudomonadati</taxon>
        <taxon>Pseudomonadota</taxon>
        <taxon>Gammaproteobacteria</taxon>
        <taxon>Enterobacterales</taxon>
        <taxon>Enterobacteriaceae</taxon>
        <taxon>Salmonella</taxon>
    </lineage>
</organism>
<accession>Q57M40</accession>
<comment type="function">
    <text evidence="1">NDH-1 shuttles electrons from NADH, via FMN and iron-sulfur (Fe-S) centers, to quinones in the respiratory chain. The immediate electron acceptor for the enzyme in this species is believed to be ubiquinone. Couples the redox reaction to proton translocation (for every two electrons transferred, four hydrogen ions are translocated across the cytoplasmic membrane), and thus conserves the redox energy in a proton gradient.</text>
</comment>
<comment type="catalytic activity">
    <reaction evidence="1">
        <text>a quinone + NADH + 5 H(+)(in) = a quinol + NAD(+) + 4 H(+)(out)</text>
        <dbReference type="Rhea" id="RHEA:57888"/>
        <dbReference type="ChEBI" id="CHEBI:15378"/>
        <dbReference type="ChEBI" id="CHEBI:24646"/>
        <dbReference type="ChEBI" id="CHEBI:57540"/>
        <dbReference type="ChEBI" id="CHEBI:57945"/>
        <dbReference type="ChEBI" id="CHEBI:132124"/>
    </reaction>
</comment>
<comment type="subunit">
    <text evidence="1">NDH-1 is composed of 13 different subunits. Subunits NuoA, H, J, K, L, M, N constitute the membrane sector of the complex.</text>
</comment>
<comment type="subcellular location">
    <subcellularLocation>
        <location evidence="1">Cell inner membrane</location>
        <topology evidence="1">Multi-pass membrane protein</topology>
    </subcellularLocation>
</comment>
<comment type="similarity">
    <text evidence="1">Belongs to the complex I subunit 2 family.</text>
</comment>